<protein>
    <recommendedName>
        <fullName>Envelope glycoprotein</fullName>
    </recommendedName>
    <alternativeName>
        <fullName>GP1,2</fullName>
        <shortName>GP</shortName>
    </alternativeName>
    <component>
        <recommendedName>
            <fullName>GP1</fullName>
        </recommendedName>
    </component>
    <component>
        <recommendedName>
            <fullName>GP2</fullName>
        </recommendedName>
    </component>
    <component>
        <recommendedName>
            <fullName>GP2-delta</fullName>
        </recommendedName>
    </component>
</protein>
<accession>Q66810</accession>
<reference key="1">
    <citation type="journal article" date="1996" name="Proc. Natl. Acad. Sci. U.S.A.">
        <title>The virion glycoproteins of Ebola viruses are encoded in two reading frames and are expressed through transcriptional editing.</title>
        <authorList>
            <person name="Sanchez A."/>
            <person name="Trappier S.G."/>
            <person name="Mahy B.W.J."/>
            <person name="Peters C.J."/>
            <person name="Nichol S.T."/>
        </authorList>
    </citation>
    <scope>NUCLEOTIDE SEQUENCE [GENOMIC RNA]</scope>
    <scope>RNA EDITING</scope>
</reference>
<reference key="2">
    <citation type="journal article" date="2004" name="J. Virol.">
        <title>Human macrophage C-type lectin specific for galactose and N-acetylgalactosamine promotes filovirus entry.</title>
        <authorList>
            <person name="Takada A."/>
            <person name="Fujioka K."/>
            <person name="Tsuiji M."/>
            <person name="Morikawa A."/>
            <person name="Higashi N."/>
            <person name="Ebihara H."/>
            <person name="Kobasa D."/>
            <person name="Feldmann H."/>
            <person name="Irimura T."/>
            <person name="Kawaoka Y."/>
        </authorList>
    </citation>
    <scope>INTERACTION WITH HUMAN CLEC10A</scope>
</reference>
<gene>
    <name type="primary">GP</name>
</gene>
<dbReference type="EMBL" id="U28006">
    <property type="protein sequence ID" value="AAB37093.1"/>
    <property type="molecule type" value="Genomic_RNA"/>
</dbReference>
<dbReference type="BMRB" id="Q66810"/>
<dbReference type="SMR" id="Q66810"/>
<dbReference type="GlyCosmos" id="Q66810">
    <property type="glycosylation" value="10 sites, No reported glycans"/>
</dbReference>
<dbReference type="ABCD" id="Q66810">
    <property type="antibodies" value="1 sequenced antibody"/>
</dbReference>
<dbReference type="GO" id="GO:0005576">
    <property type="term" value="C:extracellular region"/>
    <property type="evidence" value="ECO:0007669"/>
    <property type="project" value="UniProtKB-SubCell"/>
</dbReference>
<dbReference type="GO" id="GO:0020002">
    <property type="term" value="C:host cell plasma membrane"/>
    <property type="evidence" value="ECO:0007669"/>
    <property type="project" value="UniProtKB-SubCell"/>
</dbReference>
<dbReference type="GO" id="GO:0016020">
    <property type="term" value="C:membrane"/>
    <property type="evidence" value="ECO:0007669"/>
    <property type="project" value="UniProtKB-KW"/>
</dbReference>
<dbReference type="GO" id="GO:0019031">
    <property type="term" value="C:viral envelope"/>
    <property type="evidence" value="ECO:0007669"/>
    <property type="project" value="UniProtKB-KW"/>
</dbReference>
<dbReference type="GO" id="GO:0055036">
    <property type="term" value="C:virion membrane"/>
    <property type="evidence" value="ECO:0007669"/>
    <property type="project" value="UniProtKB-SubCell"/>
</dbReference>
<dbReference type="GO" id="GO:0075512">
    <property type="term" value="P:clathrin-dependent endocytosis of virus by host cell"/>
    <property type="evidence" value="ECO:0007669"/>
    <property type="project" value="UniProtKB-KW"/>
</dbReference>
<dbReference type="GO" id="GO:0098670">
    <property type="term" value="P:entry receptor-mediated virion attachment to host cell"/>
    <property type="evidence" value="ECO:0007669"/>
    <property type="project" value="UniProtKB-KW"/>
</dbReference>
<dbReference type="GO" id="GO:0039654">
    <property type="term" value="P:fusion of virus membrane with host endosome membrane"/>
    <property type="evidence" value="ECO:0007669"/>
    <property type="project" value="UniProtKB-KW"/>
</dbReference>
<dbReference type="GO" id="GO:0052170">
    <property type="term" value="P:symbiont-mediated suppression of host innate immune response"/>
    <property type="evidence" value="ECO:0007669"/>
    <property type="project" value="UniProtKB-KW"/>
</dbReference>
<dbReference type="GO" id="GO:0039587">
    <property type="term" value="P:symbiont-mediated-mediated suppression of host tetherin activity"/>
    <property type="evidence" value="ECO:0007669"/>
    <property type="project" value="UniProtKB-KW"/>
</dbReference>
<dbReference type="CDD" id="cd09850">
    <property type="entry name" value="Ebola-like_HR1-HR2"/>
    <property type="match status" value="1"/>
</dbReference>
<dbReference type="Gene3D" id="1.10.287.210">
    <property type="match status" value="1"/>
</dbReference>
<dbReference type="InterPro" id="IPR054584">
    <property type="entry name" value="Ebola-like_HR1-HR2"/>
</dbReference>
<dbReference type="InterPro" id="IPR014625">
    <property type="entry name" value="GPC_FiloV"/>
</dbReference>
<dbReference type="InterPro" id="IPR002561">
    <property type="entry name" value="GPC_filovir-type_extra_dom"/>
</dbReference>
<dbReference type="Pfam" id="PF22307">
    <property type="entry name" value="Ebola-like_HR1-HR2"/>
    <property type="match status" value="1"/>
</dbReference>
<dbReference type="Pfam" id="PF01611">
    <property type="entry name" value="Filo_glycop"/>
    <property type="match status" value="1"/>
</dbReference>
<dbReference type="PIRSF" id="PIRSF036874">
    <property type="entry name" value="GPC_FiloV"/>
    <property type="match status" value="1"/>
</dbReference>
<dbReference type="SUPFAM" id="SSF58069">
    <property type="entry name" value="Virus ectodomain"/>
    <property type="match status" value="1"/>
</dbReference>
<proteinExistence type="evidence at protein level"/>
<organism>
    <name type="scientific">Tai Forest ebolavirus (strain Cote d'Ivoire-94)</name>
    <name type="common">TAFV</name>
    <name type="synonym">Cote d'Ivoire Ebola virus</name>
    <dbReference type="NCBI Taxonomy" id="128999"/>
    <lineage>
        <taxon>Viruses</taxon>
        <taxon>Riboviria</taxon>
        <taxon>Orthornavirae</taxon>
        <taxon>Negarnaviricota</taxon>
        <taxon>Haploviricotina</taxon>
        <taxon>Monjiviricetes</taxon>
        <taxon>Mononegavirales</taxon>
        <taxon>Filoviridae</taxon>
        <taxon>Orthoebolavirus</taxon>
        <taxon>Orthoebolavirus taiense</taxon>
        <taxon>Tai Forest ebolavirus</taxon>
    </lineage>
</organism>
<sequence>MGASGILQLPRERFRKTSFFVWVIILFHKVFSIPLGVVHNNTLQVSDIDKFVCRDKLSSTSQLKSVGLNLEGNGVATDVPTATKRWGFRAGVPPKVVNYEAGEWAENCYNLAIKKVDGSECLPEAPEGVRDFPRCRYVHKVSGTGPCPGGLAFHKEGAFFLYDRLASTIIYRGTTFAEGVIAFLILPKARKDFFQSPPLHEPANMTTDPSSYYHTTTINYVVDNFGTNTTEFLFQVDHLTYVQLEARFTPQFLVLLNETIYSDNRRSNTTGKLIWKINPTVDTSMGEWAFWENKKNFTKTLSSEELSFVPVPETQNQVLDTTATVSPPISAHNHAGEDHKELVSEDSTPVVQMQNIKGKDTMPTTVTGVPTTTPSPFPINARNTDHTKSFIGLEGPQEDHSTTQPAKTTSQPTNSTESTTLNPTSEPSSRGTGPSSPTVPNTTESHAELGKTTPTTLPEQHTAASAIPRAVHPDELSGPGFLTNTIRGVTNLLTGSRRKRRDVTPNTQPKCNPNLHYWTALDEGAAIGLAWIPYFGPAAEGIYTEGIMENQNGLICGLRQLANETTQALQLFLRATTELRTFSILNRKAIDFLLQRWGGTCHILGPDCCIEPQDWTKNITDKIDQIIHDFVDNNLPNQNDGSNWWTGWKQWVPAGIGITGVIIAIIALLCICKFML</sequence>
<feature type="signal peptide" evidence="4">
    <location>
        <begin position="1"/>
        <end position="32"/>
    </location>
</feature>
<feature type="chain" id="PRO_0000037467" description="Envelope glycoprotein">
    <location>
        <begin position="33"/>
        <end position="676"/>
    </location>
</feature>
<feature type="chain" id="PRO_0000037468" description="GP1" evidence="1">
    <location>
        <begin position="33"/>
        <end position="501"/>
    </location>
</feature>
<feature type="chain" id="PRO_0000037469" description="GP2" evidence="1">
    <location>
        <begin position="502"/>
        <end position="676"/>
    </location>
</feature>
<feature type="chain" id="PRO_0000245056" description="GP2-delta" evidence="1">
    <location>
        <begin position="502"/>
        <end position="637"/>
    </location>
</feature>
<feature type="topological domain" description="Extracellular" evidence="4">
    <location>
        <begin position="33"/>
        <end position="650"/>
    </location>
</feature>
<feature type="transmembrane region" description="Helical" evidence="4">
    <location>
        <begin position="651"/>
        <end position="671"/>
    </location>
</feature>
<feature type="topological domain" description="Cytoplasmic" evidence="4">
    <location>
        <begin position="672"/>
        <end position="676"/>
    </location>
</feature>
<feature type="region of interest" description="Receptor-binding" evidence="1">
    <location>
        <begin position="54"/>
        <end position="201"/>
    </location>
</feature>
<feature type="region of interest" description="Mucin-like region" evidence="1">
    <location>
        <begin position="305"/>
        <end position="485"/>
    </location>
</feature>
<feature type="region of interest" description="Disordered" evidence="5">
    <location>
        <begin position="356"/>
        <end position="463"/>
    </location>
</feature>
<feature type="region of interest" description="Fusion peptide" evidence="1">
    <location>
        <begin position="524"/>
        <end position="539"/>
    </location>
</feature>
<feature type="coiled-coil region" evidence="4">
    <location>
        <begin position="554"/>
        <end position="595"/>
    </location>
</feature>
<feature type="coiled-coil region" evidence="4">
    <location>
        <begin position="615"/>
        <end position="634"/>
    </location>
</feature>
<feature type="compositionally biased region" description="Low complexity" evidence="5">
    <location>
        <begin position="361"/>
        <end position="374"/>
    </location>
</feature>
<feature type="compositionally biased region" description="Polar residues" evidence="5">
    <location>
        <begin position="402"/>
        <end position="422"/>
    </location>
</feature>
<feature type="compositionally biased region" description="Low complexity" evidence="5">
    <location>
        <begin position="423"/>
        <end position="440"/>
    </location>
</feature>
<feature type="compositionally biased region" description="Polar residues" evidence="5">
    <location>
        <begin position="452"/>
        <end position="463"/>
    </location>
</feature>
<feature type="site" description="Involved in receptor recognition and/or post-binding events" evidence="4">
    <location>
        <position position="57"/>
    </location>
</feature>
<feature type="site" description="Involved in receptor recognition and/or post-binding events" evidence="4">
    <location>
        <position position="63"/>
    </location>
</feature>
<feature type="site" description="Involved in receptor recognition and/or post-binding events" evidence="4">
    <location>
        <position position="88"/>
    </location>
</feature>
<feature type="site" description="Involved in receptor recognition and/or post-binding events" evidence="4">
    <location>
        <position position="95"/>
    </location>
</feature>
<feature type="site" description="Involved in receptor recognition and/or post-binding events" evidence="4">
    <location>
        <position position="170"/>
    </location>
</feature>
<feature type="site" description="Cleavage; by host furin" evidence="1">
    <location>
        <begin position="501"/>
        <end position="502"/>
    </location>
</feature>
<feature type="site" description="Cleavage; by host ADAM17" evidence="1">
    <location>
        <begin position="637"/>
        <end position="638"/>
    </location>
</feature>
<feature type="lipid moiety-binding region" description="S-palmitoyl cysteine; by host" evidence="3">
    <location>
        <position position="670"/>
    </location>
</feature>
<feature type="lipid moiety-binding region" description="S-palmitoyl cysteine; by host" evidence="3">
    <location>
        <position position="672"/>
    </location>
</feature>
<feature type="glycosylation site" description="N-linked (GlcNAc...) asparagine; by host" evidence="4">
    <location>
        <position position="40"/>
    </location>
</feature>
<feature type="glycosylation site" description="N-linked (GlcNAc...) asparagine; by host" evidence="4">
    <location>
        <position position="204"/>
    </location>
</feature>
<feature type="glycosylation site" description="N-linked (GlcNAc...) asparagine; by host" evidence="4">
    <location>
        <position position="228"/>
    </location>
</feature>
<feature type="glycosylation site" description="N-linked (GlcNAc...) asparagine; by host" evidence="4">
    <location>
        <position position="257"/>
    </location>
</feature>
<feature type="glycosylation site" description="N-linked (GlcNAc...) asparagine; by host" evidence="4">
    <location>
        <position position="268"/>
    </location>
</feature>
<feature type="glycosylation site" description="N-linked (GlcNAc...) asparagine; by host" evidence="4">
    <location>
        <position position="296"/>
    </location>
</feature>
<feature type="glycosylation site" description="N-linked (GlcNAc...) asparagine; by host" evidence="4">
    <location>
        <position position="414"/>
    </location>
</feature>
<feature type="glycosylation site" description="N-linked (GlcNAc...) asparagine; by host" evidence="4">
    <location>
        <position position="441"/>
    </location>
</feature>
<feature type="glycosylation site" description="N-linked (GlcNAc...) asparagine; by host" evidence="4">
    <location>
        <position position="563"/>
    </location>
</feature>
<feature type="glycosylation site" description="N-linked (GlcNAc...) asparagine; by host" evidence="4">
    <location>
        <position position="618"/>
    </location>
</feature>
<feature type="disulfide bond" description="Interchain (between GP1 and GP2 chains)" evidence="1">
    <location>
        <begin position="53"/>
        <end position="609"/>
    </location>
</feature>
<feature type="disulfide bond" evidence="4">
    <location>
        <begin position="108"/>
        <end position="135"/>
    </location>
</feature>
<feature type="disulfide bond" evidence="4">
    <location>
        <begin position="121"/>
        <end position="147"/>
    </location>
</feature>
<feature type="disulfide bond" evidence="4">
    <location>
        <begin position="511"/>
        <end position="556"/>
    </location>
</feature>
<feature type="disulfide bond" evidence="2">
    <location>
        <begin position="601"/>
        <end position="608"/>
    </location>
</feature>
<name>VGP_TAFVC</name>
<comment type="function">
    <text evidence="1">GP1 is responsible for binding to the receptor(s) on target cells. Interacts with CD209/DC-SIGN and CLEC4M/DC-SIGNR which act as cofactors for virus entry into the host cell. Binding to CD209 and CLEC4M, which are respectively found on dendritic cells (DCs), and on endothelial cells of liver sinusoids and lymph node sinuses, facilitate infection of macrophages and endothelial cells. These interactions not only facilitate virus cell entry, but also allow capture of viral particles by DCs and subsequent transmission to susceptible cells without DCs infection (trans infection). Binding to the macrophage specific lectin CLEC10A also seems to enhance virus infectivity. Interaction with FOLR1/folate receptor alpha may be a cofactor for virus entry in some cell types, although results are contradictory. Members of the Tyro3 receptor tyrosine kinase family also seem to be cell entry factors in filovirus infection. Once attached, the virions are internalized through clathrin-dependent endocytosis and/or macropinocytosis. After internalization of the virus into the endosomes of the host cell, proteolysis of GP1 by two cysteine proteases, CTSB/cathepsin B and CTSL/cathepsin L presumably induces a conformational change of GP2, unmasking its fusion peptide and initiating membranes fusion (By similarity).</text>
</comment>
<comment type="function">
    <text evidence="1">GP2 acts as a class I viral fusion protein. Under the current model, the protein has at least 3 conformational states: pre-fusion native state, pre-hairpin intermediate state, and post-fusion hairpin state. During viral and target cell membrane fusion, the coiled coil regions (heptad repeats) assume a trimer-of-hairpins structure, positioning the fusion peptide in close proximity to the C-terminal region of the ectodomain. The formation of this structure appears to drive apposition and subsequent fusion of viral and target cell membranes. Responsible for penetration of the virus into the cell cytoplasm by mediating the fusion of the membrane of the endocytosed virus particle with the endosomal membrane. Low pH in endosomes induces an irreversible conformational change in GP2, releasing the fusion hydrophobic peptide (By similarity).</text>
</comment>
<comment type="function">
    <molecule>Envelope glycoprotein</molecule>
    <text evidence="3">GP1,2 which is the disulfid-linked complex of GP1 and GP2, mediates endothelial cell activation and decreases endothelial barrier function. Mediates activation of primary macrophages. At terminal stages of the viral infection, when its expression is high, GP1,2 down-modulates the expression of various host cell surface molecules that are essential for immune surveillance and cell adhesion. Down-modulates integrins ITGA1, ITGA2, ITGA3, ITGA4, ITGA5, ITGA6, ITGAV and ITGB1. GP1,2 alters the cellular recycling of the dimer alpha-V/beta-3 via a dynamin-dependent pathway. Decrease in the host cell surface expression of various adhesion molecules may lead to cell detachment, contributing to the disruption of blood vessel integrity and hemorrhages developed during Ebola virus infection (cytotoxicity). This cytotoxicity appears late in the infection, only after the massive release of viral particles by infected cells. Down-modulation of host MHC-I, leading to altered recognition by immune cells, may explain the immune suppression and inflammatory dysfunction linked to Ebola infection. Also down-modulates EGFR surface expression. Counteracts the antiviral effect of host tetherin (By similarity).</text>
</comment>
<comment type="function">
    <text evidence="1">GP2delta is part of the complex GP1,2delta released by host ADAM17 metalloprotease. This secreted complex may play a role in the pathogenesis of the virus by efficiently blocking the neutralizing antibodies that would otherwise neutralize the virus surface glycoproteins GP1,2. Might therefore contribute to the lack of inflammatory reaction seen during infection in spite the of extensive necrosis and massive virus production. GP1,2delta does not seem to be involved in activation of primary macrophages (By similarity).</text>
</comment>
<comment type="subunit">
    <text evidence="3">Homotrimer; each monomer consists of a GP1 and a GP2 subunit linked by disulfide bonds. The resulting peplomers (GP1,2) protrude from the virus surface as spikes. GP1 and GP2delta are part of GP1,2delta soluble complexes released by ectodomain shedding. GP1,2 interacts with host integrin ITGAV/alpha-V and CLEC10A. Also binds human CD209 and CLEC4M (collectively referred to as DC-SIGN(R)), as well as human FOLR1. Interacts with host entry receptor NPC1.</text>
</comment>
<comment type="subcellular location">
    <molecule>GP2</molecule>
    <subcellularLocation>
        <location evidence="3">Virion membrane</location>
        <topology evidence="4">Single-pass type I membrane protein</topology>
    </subcellularLocation>
    <subcellularLocation>
        <location evidence="3">Host cell membrane</location>
        <topology evidence="4">Single-pass type I membrane protein</topology>
    </subcellularLocation>
    <text evidence="3">In the cell, localizes to the plasma membrane lipid rafts, which probably represent the assembly and budding site.</text>
</comment>
<comment type="subcellular location">
    <molecule>GP1</molecule>
    <subcellularLocation>
        <location evidence="3">Virion membrane</location>
        <topology evidence="3">Peripheral membrane protein</topology>
    </subcellularLocation>
    <subcellularLocation>
        <location evidence="3">Host cell membrane</location>
        <topology evidence="3">Peripheral membrane protein</topology>
    </subcellularLocation>
    <text evidence="3">GP1 is not anchored to the viral envelope, but forms a disulfid-linked complex with the extravirion surface GP2. In the cell, both GP1 and GP2 localize to the plasma membrane lipid rafts, which probably represent the assembly and budding site. GP1 can also be shed after proteolytic processing.</text>
</comment>
<comment type="subcellular location">
    <molecule>GP2-delta</molecule>
    <subcellularLocation>
        <location evidence="3">Secreted</location>
    </subcellularLocation>
    <text evidence="3">GP2-delta bound to GP1 (GP1,2-delta) is produced by proteolytic cleavage of GP1,2 by host ADAM17 and shed by the virus.</text>
</comment>
<comment type="domain">
    <text evidence="1">The mucin-like region seems to be involved in the cytotoxic function. This region is also involved in binding to human CLEC10A (By similarity).</text>
</comment>
<comment type="domain">
    <text evidence="1">The coiled coil regions play a role in oligomerization and fusion activity.</text>
</comment>
<comment type="PTM">
    <text evidence="1">The signal peptide region modulates GP's high mannose glycosylation, thereby determining the efficiency of the interactions with DC-SIGN(R).</text>
</comment>
<comment type="PTM">
    <text evidence="1">N-glycosylated.</text>
</comment>
<comment type="PTM">
    <text evidence="1">O-glycosylated in the mucin-like region.</text>
</comment>
<comment type="PTM">
    <text evidence="1">Palmitoylation of GP2 is not required for its function.</text>
</comment>
<comment type="PTM">
    <text evidence="1">Specific enzymatic cleavages in vivo yield mature proteins. The precursor is processed into GP1 and GP2 by host cell furin in the trans Golgi, and maybe by other host proteases, to yield the mature GP1 and GP2 proteins. The cleavage site corresponds to the furin optimal cleavage sequence [KR]-X-[KR]-R. This cleavage does not seem to be required for function. After the internalization of the virus into cell endosomes, GP1 C-terminus is removed by the endosomal proteases cathepsin B, cathepsin L, or both, leaving a 19-kDa N-terminal fragment which is further digested by cathepsin B. Proteolytic processing of GP1,2 by host ADAM17 can remove the transmembrane anchor of GP2 and leads to shedding of complexes consisting in GP1 and truncated GP2 (GP1,2delta) (By similarity).</text>
</comment>
<comment type="RNA editing">
    <location>
        <position position="295" evidence="6"/>
    </location>
    <text>Partially edited. RNA editing at this position consists of an insertion of one adenine nucleotide. The sequence displayed here is the full-length transmembrane glycoprotein, derived from the edited RNA. The unedited RNA gives rise to the small secreted glycoprotein (AC Q66811).</text>
</comment>
<comment type="miscellaneous">
    <text evidence="1">Filoviruses entry requires functional lipid rafts at the host cell surface.</text>
</comment>
<comment type="miscellaneous">
    <text>Essential for infectivity, as it is the sole viral protein expressed at the virion surface.</text>
</comment>
<comment type="similarity">
    <text evidence="7">Belongs to the filoviruses glycoprotein family.</text>
</comment>
<organismHost>
    <name type="scientific">Epomops franqueti</name>
    <name type="common">Franquet's epauletted fruit bat</name>
    <name type="synonym">Epomophorus franqueti</name>
    <dbReference type="NCBI Taxonomy" id="77231"/>
</organismHost>
<organismHost>
    <name type="scientific">Homo sapiens</name>
    <name type="common">Human</name>
    <dbReference type="NCBI Taxonomy" id="9606"/>
</organismHost>
<organismHost>
    <name type="scientific">Myonycteris torquata</name>
    <name type="common">Little collared fruit bat</name>
    <dbReference type="NCBI Taxonomy" id="77243"/>
</organismHost>
<evidence type="ECO:0000250" key="1"/>
<evidence type="ECO:0000250" key="2">
    <source>
        <dbReference type="UniProtKB" id="O11457"/>
    </source>
</evidence>
<evidence type="ECO:0000250" key="3">
    <source>
        <dbReference type="UniProtKB" id="Q05320"/>
    </source>
</evidence>
<evidence type="ECO:0000255" key="4"/>
<evidence type="ECO:0000256" key="5">
    <source>
        <dbReference type="SAM" id="MobiDB-lite"/>
    </source>
</evidence>
<evidence type="ECO:0000269" key="6">
    <source>
    </source>
</evidence>
<evidence type="ECO:0000305" key="7"/>
<keyword id="KW-1165">Clathrin-mediated endocytosis of virus by host</keyword>
<keyword id="KW-0165">Cleavage on pair of basic residues</keyword>
<keyword id="KW-0175">Coiled coil</keyword>
<keyword id="KW-1015">Disulfide bond</keyword>
<keyword id="KW-1170">Fusion of virus membrane with host endosomal membrane</keyword>
<keyword id="KW-1168">Fusion of virus membrane with host membrane</keyword>
<keyword id="KW-0325">Glycoprotein</keyword>
<keyword id="KW-1032">Host cell membrane</keyword>
<keyword id="KW-1043">Host membrane</keyword>
<keyword id="KW-0945">Host-virus interaction</keyword>
<keyword id="KW-1090">Inhibition of host innate immune response by virus</keyword>
<keyword id="KW-1084">Inhibition of host tetherin by virus</keyword>
<keyword id="KW-0449">Lipoprotein</keyword>
<keyword id="KW-0472">Membrane</keyword>
<keyword id="KW-0564">Palmitate</keyword>
<keyword id="KW-0691">RNA editing</keyword>
<keyword id="KW-0964">Secreted</keyword>
<keyword id="KW-0732">Signal</keyword>
<keyword id="KW-0812">Transmembrane</keyword>
<keyword id="KW-1133">Transmembrane helix</keyword>
<keyword id="KW-1161">Viral attachment to host cell</keyword>
<keyword id="KW-1234">Viral attachment to host entry receptor</keyword>
<keyword id="KW-0261">Viral envelope protein</keyword>
<keyword id="KW-0899">Viral immunoevasion</keyword>
<keyword id="KW-1162">Viral penetration into host cytoplasm</keyword>
<keyword id="KW-0946">Virion</keyword>
<keyword id="KW-1164">Virus endocytosis by host</keyword>
<keyword id="KW-1160">Virus entry into host cell</keyword>